<name>PROA_PROM2</name>
<sequence>MANIFEVPQPDNDLLEKAEKVRLASIKISQTENKNRIKALNFMADYLEKNSKEILEANNADYSSAEKKGISKALLSRLKLSRAKLNAGIEGVRKVGDLADPVNQVQIKKELSKGLILERKTVPIGVLGIIFESRPDAVMQISSLAIRSGNGVMLKGGSEANLTNTSIVKALQEGLNESGLDRNAICLLTSRKDSMAMLNLEKYINLIIPRGSNELVKFIQENTRIPVLGHADGICHLFIDIEANLEMALSVALDSKIQYPAACNAIETLLVHKDIAPAFLEKAIPLFNSNDVKLIGDNRSVELGLKYEASLQDWKTEYLDLILSIKIVNNVEEAITHIQKYSSKHTDGIITENSNTANKFMNVVDSSGVFHNCSTRFADGFRYGFGAEVGISTQTLPPRGPVGLEGLVTYKYFLKGGGHIVDDFSSGKAIYTHKDL</sequence>
<comment type="function">
    <text evidence="1">Catalyzes the NADPH-dependent reduction of L-glutamate 5-phosphate into L-glutamate 5-semialdehyde and phosphate. The product spontaneously undergoes cyclization to form 1-pyrroline-5-carboxylate.</text>
</comment>
<comment type="catalytic activity">
    <reaction evidence="1">
        <text>L-glutamate 5-semialdehyde + phosphate + NADP(+) = L-glutamyl 5-phosphate + NADPH + H(+)</text>
        <dbReference type="Rhea" id="RHEA:19541"/>
        <dbReference type="ChEBI" id="CHEBI:15378"/>
        <dbReference type="ChEBI" id="CHEBI:43474"/>
        <dbReference type="ChEBI" id="CHEBI:57783"/>
        <dbReference type="ChEBI" id="CHEBI:58066"/>
        <dbReference type="ChEBI" id="CHEBI:58274"/>
        <dbReference type="ChEBI" id="CHEBI:58349"/>
        <dbReference type="EC" id="1.2.1.41"/>
    </reaction>
</comment>
<comment type="pathway">
    <text evidence="1">Amino-acid biosynthesis; L-proline biosynthesis; L-glutamate 5-semialdehyde from L-glutamate: step 2/2.</text>
</comment>
<comment type="subcellular location">
    <subcellularLocation>
        <location evidence="1">Cytoplasm</location>
    </subcellularLocation>
</comment>
<comment type="similarity">
    <text evidence="1">Belongs to the gamma-glutamyl phosphate reductase family.</text>
</comment>
<evidence type="ECO:0000255" key="1">
    <source>
        <dbReference type="HAMAP-Rule" id="MF_00412"/>
    </source>
</evidence>
<feature type="chain" id="PRO_1000060843" description="Gamma-glutamyl phosphate reductase">
    <location>
        <begin position="1"/>
        <end position="436"/>
    </location>
</feature>
<reference key="1">
    <citation type="journal article" date="2007" name="PLoS Genet.">
        <title>Patterns and implications of gene gain and loss in the evolution of Prochlorococcus.</title>
        <authorList>
            <person name="Kettler G.C."/>
            <person name="Martiny A.C."/>
            <person name="Huang K."/>
            <person name="Zucker J."/>
            <person name="Coleman M.L."/>
            <person name="Rodrigue S."/>
            <person name="Chen F."/>
            <person name="Lapidus A."/>
            <person name="Ferriera S."/>
            <person name="Johnson J."/>
            <person name="Steglich C."/>
            <person name="Church G.M."/>
            <person name="Richardson P."/>
            <person name="Chisholm S.W."/>
        </authorList>
    </citation>
    <scope>NUCLEOTIDE SEQUENCE [LARGE SCALE GENOMIC DNA]</scope>
    <source>
        <strain>MIT 9215</strain>
    </source>
</reference>
<organism>
    <name type="scientific">Prochlorococcus marinus (strain MIT 9215)</name>
    <dbReference type="NCBI Taxonomy" id="93060"/>
    <lineage>
        <taxon>Bacteria</taxon>
        <taxon>Bacillati</taxon>
        <taxon>Cyanobacteriota</taxon>
        <taxon>Cyanophyceae</taxon>
        <taxon>Synechococcales</taxon>
        <taxon>Prochlorococcaceae</taxon>
        <taxon>Prochlorococcus</taxon>
    </lineage>
</organism>
<accession>A8G3V6</accession>
<proteinExistence type="inferred from homology"/>
<gene>
    <name evidence="1" type="primary">proA</name>
    <name type="ordered locus">P9215_06721</name>
</gene>
<protein>
    <recommendedName>
        <fullName evidence="1">Gamma-glutamyl phosphate reductase</fullName>
        <shortName evidence="1">GPR</shortName>
        <ecNumber evidence="1">1.2.1.41</ecNumber>
    </recommendedName>
    <alternativeName>
        <fullName evidence="1">Glutamate-5-semialdehyde dehydrogenase</fullName>
    </alternativeName>
    <alternativeName>
        <fullName evidence="1">Glutamyl-gamma-semialdehyde dehydrogenase</fullName>
        <shortName evidence="1">GSA dehydrogenase</shortName>
    </alternativeName>
</protein>
<keyword id="KW-0028">Amino-acid biosynthesis</keyword>
<keyword id="KW-0963">Cytoplasm</keyword>
<keyword id="KW-0521">NADP</keyword>
<keyword id="KW-0560">Oxidoreductase</keyword>
<keyword id="KW-0641">Proline biosynthesis</keyword>
<dbReference type="EC" id="1.2.1.41" evidence="1"/>
<dbReference type="EMBL" id="CP000825">
    <property type="protein sequence ID" value="ABV50287.1"/>
    <property type="molecule type" value="Genomic_DNA"/>
</dbReference>
<dbReference type="RefSeq" id="WP_012007407.1">
    <property type="nucleotide sequence ID" value="NC_009840.1"/>
</dbReference>
<dbReference type="SMR" id="A8G3V6"/>
<dbReference type="STRING" id="93060.P9215_06721"/>
<dbReference type="KEGG" id="pmh:P9215_06721"/>
<dbReference type="eggNOG" id="COG0014">
    <property type="taxonomic scope" value="Bacteria"/>
</dbReference>
<dbReference type="HOGENOM" id="CLU_030231_0_1_3"/>
<dbReference type="OrthoDB" id="9809970at2"/>
<dbReference type="UniPathway" id="UPA00098">
    <property type="reaction ID" value="UER00360"/>
</dbReference>
<dbReference type="Proteomes" id="UP000002014">
    <property type="component" value="Chromosome"/>
</dbReference>
<dbReference type="GO" id="GO:0005737">
    <property type="term" value="C:cytoplasm"/>
    <property type="evidence" value="ECO:0007669"/>
    <property type="project" value="UniProtKB-SubCell"/>
</dbReference>
<dbReference type="GO" id="GO:0004350">
    <property type="term" value="F:glutamate-5-semialdehyde dehydrogenase activity"/>
    <property type="evidence" value="ECO:0007669"/>
    <property type="project" value="UniProtKB-UniRule"/>
</dbReference>
<dbReference type="GO" id="GO:0050661">
    <property type="term" value="F:NADP binding"/>
    <property type="evidence" value="ECO:0007669"/>
    <property type="project" value="InterPro"/>
</dbReference>
<dbReference type="GO" id="GO:0055129">
    <property type="term" value="P:L-proline biosynthetic process"/>
    <property type="evidence" value="ECO:0007669"/>
    <property type="project" value="UniProtKB-UniRule"/>
</dbReference>
<dbReference type="CDD" id="cd07079">
    <property type="entry name" value="ALDH_F18-19_ProA-GPR"/>
    <property type="match status" value="1"/>
</dbReference>
<dbReference type="FunFam" id="3.40.309.10:FF:000006">
    <property type="entry name" value="Gamma-glutamyl phosphate reductase"/>
    <property type="match status" value="1"/>
</dbReference>
<dbReference type="Gene3D" id="3.40.605.10">
    <property type="entry name" value="Aldehyde Dehydrogenase, Chain A, domain 1"/>
    <property type="match status" value="1"/>
</dbReference>
<dbReference type="Gene3D" id="3.40.309.10">
    <property type="entry name" value="Aldehyde Dehydrogenase, Chain A, domain 2"/>
    <property type="match status" value="1"/>
</dbReference>
<dbReference type="HAMAP" id="MF_00412">
    <property type="entry name" value="ProA"/>
    <property type="match status" value="1"/>
</dbReference>
<dbReference type="InterPro" id="IPR016161">
    <property type="entry name" value="Ald_DH/histidinol_DH"/>
</dbReference>
<dbReference type="InterPro" id="IPR016163">
    <property type="entry name" value="Ald_DH_C"/>
</dbReference>
<dbReference type="InterPro" id="IPR016162">
    <property type="entry name" value="Ald_DH_N"/>
</dbReference>
<dbReference type="InterPro" id="IPR015590">
    <property type="entry name" value="Aldehyde_DH_dom"/>
</dbReference>
<dbReference type="InterPro" id="IPR020593">
    <property type="entry name" value="G-glutamylP_reductase_CS"/>
</dbReference>
<dbReference type="InterPro" id="IPR012134">
    <property type="entry name" value="Glu-5-SA_DH"/>
</dbReference>
<dbReference type="InterPro" id="IPR000965">
    <property type="entry name" value="GPR_dom"/>
</dbReference>
<dbReference type="NCBIfam" id="NF001221">
    <property type="entry name" value="PRK00197.1"/>
    <property type="match status" value="1"/>
</dbReference>
<dbReference type="NCBIfam" id="TIGR00407">
    <property type="entry name" value="proA"/>
    <property type="match status" value="1"/>
</dbReference>
<dbReference type="PANTHER" id="PTHR11063:SF8">
    <property type="entry name" value="DELTA-1-PYRROLINE-5-CARBOXYLATE SYNTHASE"/>
    <property type="match status" value="1"/>
</dbReference>
<dbReference type="PANTHER" id="PTHR11063">
    <property type="entry name" value="GLUTAMATE SEMIALDEHYDE DEHYDROGENASE"/>
    <property type="match status" value="1"/>
</dbReference>
<dbReference type="Pfam" id="PF00171">
    <property type="entry name" value="Aldedh"/>
    <property type="match status" value="1"/>
</dbReference>
<dbReference type="PIRSF" id="PIRSF000151">
    <property type="entry name" value="GPR"/>
    <property type="match status" value="1"/>
</dbReference>
<dbReference type="SUPFAM" id="SSF53720">
    <property type="entry name" value="ALDH-like"/>
    <property type="match status" value="1"/>
</dbReference>
<dbReference type="PROSITE" id="PS01223">
    <property type="entry name" value="PROA"/>
    <property type="match status" value="1"/>
</dbReference>